<sequence length="238" mass="28767">MVKPKTKISKQKFLSQITKKPRKCDIKKERKLENQRIRKYQQFLDILNLMWSIVDSVSLEDHINLAETMKDDYILLLLRRPSKKNILDDVLSNIDLTILKETTLNLLSTSTWKYISLYALMDEKFIFKWSHKIDFFRLKMNEKGCVYGGGAFDPRFTLQRRVFSKKFHKLFPGFQMYEPCERCYIDTQWLSKNIYIKDEQKWFCEDCFDEVCHYCLFEDCDGNCDDFGFDDYWSYDWP</sequence>
<accession>Q91FC1</accession>
<proteinExistence type="predicted"/>
<reference key="1">
    <citation type="journal article" date="2001" name="Virology">
        <title>Analysis of the first complete DNA sequence of an invertebrate iridovirus: coding strategy of the genome of Chilo iridescent virus.</title>
        <authorList>
            <person name="Jakob N.J."/>
            <person name="Mueller K."/>
            <person name="Bahr U."/>
            <person name="Darai G."/>
        </authorList>
    </citation>
    <scope>NUCLEOTIDE SEQUENCE [LARGE SCALE GENOMIC DNA]</scope>
</reference>
<reference key="2">
    <citation type="journal article" date="2007" name="Virol. J.">
        <title>Comparative genomic analysis of the family Iridoviridae: re-annotating and defining the core set of iridovirus genes.</title>
        <authorList>
            <person name="Eaton H.E."/>
            <person name="Metcalf J."/>
            <person name="Penny E."/>
            <person name="Tcherepanov V."/>
            <person name="Upton C."/>
            <person name="Brunetti C.R."/>
        </authorList>
    </citation>
    <scope>GENOME REANNOTATION</scope>
</reference>
<organismHost>
    <name type="scientific">Acheta domesticus</name>
    <name type="common">House cricket</name>
    <dbReference type="NCBI Taxonomy" id="6997"/>
</organismHost>
<organismHost>
    <name type="scientific">Chilo suppressalis</name>
    <name type="common">Asiatic rice borer moth</name>
    <dbReference type="NCBI Taxonomy" id="168631"/>
</organismHost>
<organismHost>
    <name type="scientific">Gryllus bimaculatus</name>
    <name type="common">Two-spotted cricket</name>
    <dbReference type="NCBI Taxonomy" id="6999"/>
</organismHost>
<organismHost>
    <name type="scientific">Gryllus campestris</name>
    <dbReference type="NCBI Taxonomy" id="58607"/>
</organismHost>
<organismHost>
    <name type="scientific">Spodoptera frugiperda</name>
    <name type="common">Fall armyworm</name>
    <dbReference type="NCBI Taxonomy" id="7108"/>
</organismHost>
<organism>
    <name type="scientific">Invertebrate iridescent virus 6</name>
    <name type="common">IIV-6</name>
    <name type="synonym">Chilo iridescent virus</name>
    <dbReference type="NCBI Taxonomy" id="176652"/>
    <lineage>
        <taxon>Viruses</taxon>
        <taxon>Varidnaviria</taxon>
        <taxon>Bamfordvirae</taxon>
        <taxon>Nucleocytoviricota</taxon>
        <taxon>Megaviricetes</taxon>
        <taxon>Pimascovirales</taxon>
        <taxon>Iridoviridae</taxon>
        <taxon>Betairidovirinae</taxon>
        <taxon>Iridovirus</taxon>
    </lineage>
</organism>
<keyword id="KW-1185">Reference proteome</keyword>
<name>404L_IIV6</name>
<gene>
    <name type="ORF">IIV6-404L</name>
</gene>
<dbReference type="EMBL" id="AF303741">
    <property type="protein sequence ID" value="AAK82264.1"/>
    <property type="molecule type" value="Genomic_DNA"/>
</dbReference>
<dbReference type="RefSeq" id="NP_149867.1">
    <property type="nucleotide sequence ID" value="NC_003038.1"/>
</dbReference>
<dbReference type="KEGG" id="vg:1733005"/>
<dbReference type="OrthoDB" id="14637at10239"/>
<dbReference type="Proteomes" id="UP000001359">
    <property type="component" value="Genome"/>
</dbReference>
<feature type="chain" id="PRO_0000377883" description="Uncharacterized protein 404L">
    <location>
        <begin position="1"/>
        <end position="238"/>
    </location>
</feature>
<protein>
    <recommendedName>
        <fullName>Uncharacterized protein 404L</fullName>
    </recommendedName>
</protein>